<proteinExistence type="inferred from homology"/>
<accession>Q8DCT6</accession>
<name>SYW_VIBVU</name>
<evidence type="ECO:0000255" key="1">
    <source>
        <dbReference type="HAMAP-Rule" id="MF_00140"/>
    </source>
</evidence>
<feature type="chain" id="PRO_0000136708" description="Tryptophan--tRNA ligase">
    <location>
        <begin position="1"/>
        <end position="338"/>
    </location>
</feature>
<feature type="short sequence motif" description="'HIGH' region" evidence="1">
    <location>
        <begin position="12"/>
        <end position="20"/>
    </location>
</feature>
<feature type="short sequence motif" description="'KMSKS' region" evidence="1">
    <location>
        <begin position="198"/>
        <end position="202"/>
    </location>
</feature>
<feature type="binding site" evidence="1">
    <location>
        <begin position="11"/>
        <end position="13"/>
    </location>
    <ligand>
        <name>ATP</name>
        <dbReference type="ChEBI" id="CHEBI:30616"/>
    </ligand>
</feature>
<feature type="binding site" evidence="1">
    <location>
        <begin position="19"/>
        <end position="20"/>
    </location>
    <ligand>
        <name>ATP</name>
        <dbReference type="ChEBI" id="CHEBI:30616"/>
    </ligand>
</feature>
<feature type="binding site" evidence="1">
    <location>
        <position position="135"/>
    </location>
    <ligand>
        <name>L-tryptophan</name>
        <dbReference type="ChEBI" id="CHEBI:57912"/>
    </ligand>
</feature>
<feature type="binding site" evidence="1">
    <location>
        <begin position="147"/>
        <end position="149"/>
    </location>
    <ligand>
        <name>ATP</name>
        <dbReference type="ChEBI" id="CHEBI:30616"/>
    </ligand>
</feature>
<feature type="binding site" evidence="1">
    <location>
        <position position="189"/>
    </location>
    <ligand>
        <name>ATP</name>
        <dbReference type="ChEBI" id="CHEBI:30616"/>
    </ligand>
</feature>
<feature type="binding site" evidence="1">
    <location>
        <begin position="198"/>
        <end position="202"/>
    </location>
    <ligand>
        <name>ATP</name>
        <dbReference type="ChEBI" id="CHEBI:30616"/>
    </ligand>
</feature>
<sequence>MSKPIVLSGVQPSGELSIGNYLGALRQWQQMQDDYDCQYCVVDLHAITVRQDPKALHEATLDALAICLAVGVDPKKSTLFVQSHVPEHAQLGWLLNCYTQMGELSRMTQFKDKSARYANDVNVGLFGYPVLMAADILLYGAHQVPVGSDQKQHLELARDIATRFNNIYSPENPIFTIPEPYIPTVNARVMSLQDATKKMSKSDDNRKNVITLLEDPKSIIKKINKAQTDTETPPRIAHDWDNKAGISNLMGLYSAATGMSFEEIEAKYQGVEMYGPFKKDVGEALVSMLEPIQAEYHRIREDRGYMNEVMRQGADKASARAAETLKKVYEVVGFVGRP</sequence>
<reference key="1">
    <citation type="submission" date="2002-12" db="EMBL/GenBank/DDBJ databases">
        <title>Complete genome sequence of Vibrio vulnificus CMCP6.</title>
        <authorList>
            <person name="Rhee J.H."/>
            <person name="Kim S.Y."/>
            <person name="Chung S.S."/>
            <person name="Kim J.J."/>
            <person name="Moon Y.H."/>
            <person name="Jeong H."/>
            <person name="Choy H.E."/>
        </authorList>
    </citation>
    <scope>NUCLEOTIDE SEQUENCE [LARGE SCALE GENOMIC DNA]</scope>
    <source>
        <strain>CMCP6</strain>
    </source>
</reference>
<gene>
    <name evidence="1" type="primary">trpS</name>
    <name type="ordered locus">VV1_1307</name>
</gene>
<dbReference type="EC" id="6.1.1.2" evidence="1"/>
<dbReference type="EMBL" id="AE016795">
    <property type="protein sequence ID" value="AAO09762.1"/>
    <property type="molecule type" value="Genomic_DNA"/>
</dbReference>
<dbReference type="RefSeq" id="WP_011079289.1">
    <property type="nucleotide sequence ID" value="NC_004459.3"/>
</dbReference>
<dbReference type="SMR" id="Q8DCT6"/>
<dbReference type="KEGG" id="vvu:VV1_1307"/>
<dbReference type="HOGENOM" id="CLU_029244_1_4_6"/>
<dbReference type="Proteomes" id="UP000002275">
    <property type="component" value="Chromosome 1"/>
</dbReference>
<dbReference type="GO" id="GO:0005829">
    <property type="term" value="C:cytosol"/>
    <property type="evidence" value="ECO:0007669"/>
    <property type="project" value="TreeGrafter"/>
</dbReference>
<dbReference type="GO" id="GO:0005524">
    <property type="term" value="F:ATP binding"/>
    <property type="evidence" value="ECO:0007669"/>
    <property type="project" value="UniProtKB-UniRule"/>
</dbReference>
<dbReference type="GO" id="GO:0004830">
    <property type="term" value="F:tryptophan-tRNA ligase activity"/>
    <property type="evidence" value="ECO:0007669"/>
    <property type="project" value="UniProtKB-UniRule"/>
</dbReference>
<dbReference type="GO" id="GO:0006436">
    <property type="term" value="P:tryptophanyl-tRNA aminoacylation"/>
    <property type="evidence" value="ECO:0007669"/>
    <property type="project" value="UniProtKB-UniRule"/>
</dbReference>
<dbReference type="CDD" id="cd00806">
    <property type="entry name" value="TrpRS_core"/>
    <property type="match status" value="1"/>
</dbReference>
<dbReference type="FunFam" id="1.10.240.10:FF:000002">
    <property type="entry name" value="Tryptophan--tRNA ligase"/>
    <property type="match status" value="1"/>
</dbReference>
<dbReference type="FunFam" id="3.40.50.620:FF:000024">
    <property type="entry name" value="Tryptophan--tRNA ligase"/>
    <property type="match status" value="1"/>
</dbReference>
<dbReference type="Gene3D" id="3.40.50.620">
    <property type="entry name" value="HUPs"/>
    <property type="match status" value="1"/>
</dbReference>
<dbReference type="Gene3D" id="1.10.240.10">
    <property type="entry name" value="Tyrosyl-Transfer RNA Synthetase"/>
    <property type="match status" value="1"/>
</dbReference>
<dbReference type="HAMAP" id="MF_00140_B">
    <property type="entry name" value="Trp_tRNA_synth_B"/>
    <property type="match status" value="1"/>
</dbReference>
<dbReference type="InterPro" id="IPR002305">
    <property type="entry name" value="aa-tRNA-synth_Ic"/>
</dbReference>
<dbReference type="InterPro" id="IPR014729">
    <property type="entry name" value="Rossmann-like_a/b/a_fold"/>
</dbReference>
<dbReference type="InterPro" id="IPR002306">
    <property type="entry name" value="Trp-tRNA-ligase"/>
</dbReference>
<dbReference type="InterPro" id="IPR024109">
    <property type="entry name" value="Trp-tRNA-ligase_bac-type"/>
</dbReference>
<dbReference type="InterPro" id="IPR050203">
    <property type="entry name" value="Trp-tRNA_synthetase"/>
</dbReference>
<dbReference type="NCBIfam" id="TIGR00233">
    <property type="entry name" value="trpS"/>
    <property type="match status" value="1"/>
</dbReference>
<dbReference type="PANTHER" id="PTHR43766">
    <property type="entry name" value="TRYPTOPHAN--TRNA LIGASE, MITOCHONDRIAL"/>
    <property type="match status" value="1"/>
</dbReference>
<dbReference type="PANTHER" id="PTHR43766:SF1">
    <property type="entry name" value="TRYPTOPHAN--TRNA LIGASE, MITOCHONDRIAL"/>
    <property type="match status" value="1"/>
</dbReference>
<dbReference type="Pfam" id="PF00579">
    <property type="entry name" value="tRNA-synt_1b"/>
    <property type="match status" value="1"/>
</dbReference>
<dbReference type="PRINTS" id="PR01039">
    <property type="entry name" value="TRNASYNTHTRP"/>
</dbReference>
<dbReference type="SUPFAM" id="SSF52374">
    <property type="entry name" value="Nucleotidylyl transferase"/>
    <property type="match status" value="1"/>
</dbReference>
<keyword id="KW-0030">Aminoacyl-tRNA synthetase</keyword>
<keyword id="KW-0067">ATP-binding</keyword>
<keyword id="KW-0963">Cytoplasm</keyword>
<keyword id="KW-0436">Ligase</keyword>
<keyword id="KW-0547">Nucleotide-binding</keyword>
<keyword id="KW-0648">Protein biosynthesis</keyword>
<protein>
    <recommendedName>
        <fullName evidence="1">Tryptophan--tRNA ligase</fullName>
        <ecNumber evidence="1">6.1.1.2</ecNumber>
    </recommendedName>
    <alternativeName>
        <fullName evidence="1">Tryptophanyl-tRNA synthetase</fullName>
        <shortName evidence="1">TrpRS</shortName>
    </alternativeName>
</protein>
<organism>
    <name type="scientific">Vibrio vulnificus (strain CMCP6)</name>
    <dbReference type="NCBI Taxonomy" id="216895"/>
    <lineage>
        <taxon>Bacteria</taxon>
        <taxon>Pseudomonadati</taxon>
        <taxon>Pseudomonadota</taxon>
        <taxon>Gammaproteobacteria</taxon>
        <taxon>Vibrionales</taxon>
        <taxon>Vibrionaceae</taxon>
        <taxon>Vibrio</taxon>
    </lineage>
</organism>
<comment type="function">
    <text evidence="1">Catalyzes the attachment of tryptophan to tRNA(Trp).</text>
</comment>
<comment type="catalytic activity">
    <reaction evidence="1">
        <text>tRNA(Trp) + L-tryptophan + ATP = L-tryptophyl-tRNA(Trp) + AMP + diphosphate + H(+)</text>
        <dbReference type="Rhea" id="RHEA:24080"/>
        <dbReference type="Rhea" id="RHEA-COMP:9671"/>
        <dbReference type="Rhea" id="RHEA-COMP:9705"/>
        <dbReference type="ChEBI" id="CHEBI:15378"/>
        <dbReference type="ChEBI" id="CHEBI:30616"/>
        <dbReference type="ChEBI" id="CHEBI:33019"/>
        <dbReference type="ChEBI" id="CHEBI:57912"/>
        <dbReference type="ChEBI" id="CHEBI:78442"/>
        <dbReference type="ChEBI" id="CHEBI:78535"/>
        <dbReference type="ChEBI" id="CHEBI:456215"/>
        <dbReference type="EC" id="6.1.1.2"/>
    </reaction>
</comment>
<comment type="subunit">
    <text evidence="1">Homodimer.</text>
</comment>
<comment type="subcellular location">
    <subcellularLocation>
        <location evidence="1">Cytoplasm</location>
    </subcellularLocation>
</comment>
<comment type="similarity">
    <text evidence="1">Belongs to the class-I aminoacyl-tRNA synthetase family.</text>
</comment>